<accession>Q5R109</accession>
<evidence type="ECO:0000255" key="1">
    <source>
        <dbReference type="HAMAP-Rule" id="MF_00279"/>
    </source>
</evidence>
<gene>
    <name evidence="1" type="primary">pdxJ</name>
    <name type="ordered locus">IL0807</name>
</gene>
<comment type="function">
    <text evidence="1">Catalyzes the complicated ring closure reaction between the two acyclic compounds 1-deoxy-D-xylulose-5-phosphate (DXP) and 3-amino-2-oxopropyl phosphate (1-amino-acetone-3-phosphate or AAP) to form pyridoxine 5'-phosphate (PNP) and inorganic phosphate.</text>
</comment>
<comment type="catalytic activity">
    <reaction evidence="1">
        <text>3-amino-2-oxopropyl phosphate + 1-deoxy-D-xylulose 5-phosphate = pyridoxine 5'-phosphate + phosphate + 2 H2O + H(+)</text>
        <dbReference type="Rhea" id="RHEA:15265"/>
        <dbReference type="ChEBI" id="CHEBI:15377"/>
        <dbReference type="ChEBI" id="CHEBI:15378"/>
        <dbReference type="ChEBI" id="CHEBI:43474"/>
        <dbReference type="ChEBI" id="CHEBI:57279"/>
        <dbReference type="ChEBI" id="CHEBI:57792"/>
        <dbReference type="ChEBI" id="CHEBI:58589"/>
        <dbReference type="EC" id="2.6.99.2"/>
    </reaction>
</comment>
<comment type="pathway">
    <text evidence="1">Cofactor biosynthesis; pyridoxine 5'-phosphate biosynthesis; pyridoxine 5'-phosphate from D-erythrose 4-phosphate: step 5/5.</text>
</comment>
<comment type="subunit">
    <text evidence="1">Homooctamer; tetramer of dimers.</text>
</comment>
<comment type="subcellular location">
    <subcellularLocation>
        <location evidence="1">Cytoplasm</location>
    </subcellularLocation>
</comment>
<comment type="similarity">
    <text evidence="1">Belongs to the PNP synthase family.</text>
</comment>
<organism>
    <name type="scientific">Idiomarina loihiensis (strain ATCC BAA-735 / DSM 15497 / L2-TR)</name>
    <dbReference type="NCBI Taxonomy" id="283942"/>
    <lineage>
        <taxon>Bacteria</taxon>
        <taxon>Pseudomonadati</taxon>
        <taxon>Pseudomonadota</taxon>
        <taxon>Gammaproteobacteria</taxon>
        <taxon>Alteromonadales</taxon>
        <taxon>Idiomarinaceae</taxon>
        <taxon>Idiomarina</taxon>
    </lineage>
</organism>
<keyword id="KW-0963">Cytoplasm</keyword>
<keyword id="KW-0664">Pyridoxine biosynthesis</keyword>
<keyword id="KW-1185">Reference proteome</keyword>
<keyword id="KW-0808">Transferase</keyword>
<reference key="1">
    <citation type="journal article" date="2004" name="Proc. Natl. Acad. Sci. U.S.A.">
        <title>Genome sequence of the deep-sea gamma-proteobacterium Idiomarina loihiensis reveals amino acid fermentation as a source of carbon and energy.</title>
        <authorList>
            <person name="Hou S."/>
            <person name="Saw J.H."/>
            <person name="Lee K.S."/>
            <person name="Freitas T.A."/>
            <person name="Belisle C."/>
            <person name="Kawarabayasi Y."/>
            <person name="Donachie S.P."/>
            <person name="Pikina A."/>
            <person name="Galperin M.Y."/>
            <person name="Koonin E.V."/>
            <person name="Makarova K.S."/>
            <person name="Omelchenko M.V."/>
            <person name="Sorokin A."/>
            <person name="Wolf Y.I."/>
            <person name="Li Q.X."/>
            <person name="Keum Y.S."/>
            <person name="Campbell S."/>
            <person name="Denery J."/>
            <person name="Aizawa S."/>
            <person name="Shibata S."/>
            <person name="Malahoff A."/>
            <person name="Alam M."/>
        </authorList>
    </citation>
    <scope>NUCLEOTIDE SEQUENCE [LARGE SCALE GENOMIC DNA]</scope>
    <source>
        <strain>ATCC BAA-735 / DSM 15497 / L2-TR</strain>
    </source>
</reference>
<protein>
    <recommendedName>
        <fullName evidence="1">Pyridoxine 5'-phosphate synthase</fullName>
        <shortName evidence="1">PNP synthase</shortName>
        <ecNumber evidence="1">2.6.99.2</ecNumber>
    </recommendedName>
</protein>
<proteinExistence type="inferred from homology"/>
<feature type="chain" id="PRO_0000231813" description="Pyridoxine 5'-phosphate synthase">
    <location>
        <begin position="1"/>
        <end position="242"/>
    </location>
</feature>
<feature type="active site" description="Proton acceptor" evidence="1">
    <location>
        <position position="45"/>
    </location>
</feature>
<feature type="active site" description="Proton acceptor" evidence="1">
    <location>
        <position position="72"/>
    </location>
</feature>
<feature type="active site" description="Proton donor" evidence="1">
    <location>
        <position position="193"/>
    </location>
</feature>
<feature type="binding site" evidence="1">
    <location>
        <position position="9"/>
    </location>
    <ligand>
        <name>3-amino-2-oxopropyl phosphate</name>
        <dbReference type="ChEBI" id="CHEBI:57279"/>
    </ligand>
</feature>
<feature type="binding site" evidence="1">
    <location>
        <begin position="11"/>
        <end position="12"/>
    </location>
    <ligand>
        <name>1-deoxy-D-xylulose 5-phosphate</name>
        <dbReference type="ChEBI" id="CHEBI:57792"/>
    </ligand>
</feature>
<feature type="binding site" evidence="1">
    <location>
        <position position="20"/>
    </location>
    <ligand>
        <name>3-amino-2-oxopropyl phosphate</name>
        <dbReference type="ChEBI" id="CHEBI:57279"/>
    </ligand>
</feature>
<feature type="binding site" evidence="1">
    <location>
        <position position="47"/>
    </location>
    <ligand>
        <name>1-deoxy-D-xylulose 5-phosphate</name>
        <dbReference type="ChEBI" id="CHEBI:57792"/>
    </ligand>
</feature>
<feature type="binding site" evidence="1">
    <location>
        <position position="52"/>
    </location>
    <ligand>
        <name>1-deoxy-D-xylulose 5-phosphate</name>
        <dbReference type="ChEBI" id="CHEBI:57792"/>
    </ligand>
</feature>
<feature type="binding site" evidence="1">
    <location>
        <position position="102"/>
    </location>
    <ligand>
        <name>1-deoxy-D-xylulose 5-phosphate</name>
        <dbReference type="ChEBI" id="CHEBI:57792"/>
    </ligand>
</feature>
<feature type="binding site" evidence="1">
    <location>
        <position position="194"/>
    </location>
    <ligand>
        <name>3-amino-2-oxopropyl phosphate</name>
        <dbReference type="ChEBI" id="CHEBI:57279"/>
    </ligand>
</feature>
<feature type="binding site" evidence="1">
    <location>
        <begin position="215"/>
        <end position="216"/>
    </location>
    <ligand>
        <name>3-amino-2-oxopropyl phosphate</name>
        <dbReference type="ChEBI" id="CHEBI:57279"/>
    </ligand>
</feature>
<feature type="site" description="Transition state stabilizer" evidence="1">
    <location>
        <position position="153"/>
    </location>
</feature>
<sequence length="242" mass="26533">MKGLRLGVNIDHVATLRNARGVRYPDPVAAAAIAEQAGADGITIHLREDRRHITDRDVAMLKQTLNVPMNLEMAVTEEMLDIAIKTQPTYSCLVPEKRQELTTEGGLNVAGQLETITDATRRLSDAGIQVSLFIDADHEQIDAAKKAGAPIVELHTGQYAEAETEEQRTVELARLMEASEYAHSIGLQVNVGHGLHYHNTLEVAEIPQVCELNIGHSIIARAVLVGLDQAVRDMRNILDKAR</sequence>
<name>PDXJ_IDILO</name>
<dbReference type="EC" id="2.6.99.2" evidence="1"/>
<dbReference type="EMBL" id="AE017340">
    <property type="protein sequence ID" value="AAV81647.1"/>
    <property type="molecule type" value="Genomic_DNA"/>
</dbReference>
<dbReference type="RefSeq" id="WP_011234058.1">
    <property type="nucleotide sequence ID" value="NC_006512.1"/>
</dbReference>
<dbReference type="SMR" id="Q5R109"/>
<dbReference type="STRING" id="283942.IL0807"/>
<dbReference type="GeneID" id="41335962"/>
<dbReference type="KEGG" id="ilo:IL0807"/>
<dbReference type="eggNOG" id="COG0854">
    <property type="taxonomic scope" value="Bacteria"/>
</dbReference>
<dbReference type="HOGENOM" id="CLU_074563_0_0_6"/>
<dbReference type="OrthoDB" id="9806590at2"/>
<dbReference type="UniPathway" id="UPA00244">
    <property type="reaction ID" value="UER00313"/>
</dbReference>
<dbReference type="Proteomes" id="UP000001171">
    <property type="component" value="Chromosome"/>
</dbReference>
<dbReference type="GO" id="GO:0005829">
    <property type="term" value="C:cytosol"/>
    <property type="evidence" value="ECO:0007669"/>
    <property type="project" value="TreeGrafter"/>
</dbReference>
<dbReference type="GO" id="GO:0033856">
    <property type="term" value="F:pyridoxine 5'-phosphate synthase activity"/>
    <property type="evidence" value="ECO:0007669"/>
    <property type="project" value="UniProtKB-EC"/>
</dbReference>
<dbReference type="GO" id="GO:0008615">
    <property type="term" value="P:pyridoxine biosynthetic process"/>
    <property type="evidence" value="ECO:0007669"/>
    <property type="project" value="UniProtKB-UniRule"/>
</dbReference>
<dbReference type="CDD" id="cd00003">
    <property type="entry name" value="PNPsynthase"/>
    <property type="match status" value="1"/>
</dbReference>
<dbReference type="FunFam" id="3.20.20.70:FF:000042">
    <property type="entry name" value="Pyridoxine 5'-phosphate synthase"/>
    <property type="match status" value="1"/>
</dbReference>
<dbReference type="Gene3D" id="3.20.20.70">
    <property type="entry name" value="Aldolase class I"/>
    <property type="match status" value="1"/>
</dbReference>
<dbReference type="HAMAP" id="MF_00279">
    <property type="entry name" value="PdxJ"/>
    <property type="match status" value="1"/>
</dbReference>
<dbReference type="InterPro" id="IPR013785">
    <property type="entry name" value="Aldolase_TIM"/>
</dbReference>
<dbReference type="InterPro" id="IPR004569">
    <property type="entry name" value="PyrdxlP_synth_PdxJ"/>
</dbReference>
<dbReference type="InterPro" id="IPR036130">
    <property type="entry name" value="Pyridoxine-5'_phos_synth"/>
</dbReference>
<dbReference type="NCBIfam" id="TIGR00559">
    <property type="entry name" value="pdxJ"/>
    <property type="match status" value="1"/>
</dbReference>
<dbReference type="NCBIfam" id="NF003623">
    <property type="entry name" value="PRK05265.1-1"/>
    <property type="match status" value="1"/>
</dbReference>
<dbReference type="NCBIfam" id="NF003624">
    <property type="entry name" value="PRK05265.1-2"/>
    <property type="match status" value="1"/>
</dbReference>
<dbReference type="NCBIfam" id="NF003625">
    <property type="entry name" value="PRK05265.1-3"/>
    <property type="match status" value="1"/>
</dbReference>
<dbReference type="NCBIfam" id="NF003627">
    <property type="entry name" value="PRK05265.1-5"/>
    <property type="match status" value="1"/>
</dbReference>
<dbReference type="PANTHER" id="PTHR30456">
    <property type="entry name" value="PYRIDOXINE 5'-PHOSPHATE SYNTHASE"/>
    <property type="match status" value="1"/>
</dbReference>
<dbReference type="PANTHER" id="PTHR30456:SF0">
    <property type="entry name" value="PYRIDOXINE 5'-PHOSPHATE SYNTHASE"/>
    <property type="match status" value="1"/>
</dbReference>
<dbReference type="Pfam" id="PF03740">
    <property type="entry name" value="PdxJ"/>
    <property type="match status" value="1"/>
</dbReference>
<dbReference type="SUPFAM" id="SSF63892">
    <property type="entry name" value="Pyridoxine 5'-phosphate synthase"/>
    <property type="match status" value="1"/>
</dbReference>